<feature type="chain" id="PRO_0000272241" description="F-box protein FBW2">
    <location>
        <begin position="1"/>
        <end position="317"/>
    </location>
</feature>
<feature type="domain" description="F-box">
    <location>
        <begin position="7"/>
        <end position="54"/>
    </location>
</feature>
<accession>Q9ZPE4</accession>
<accession>B9DGN7</accession>
<comment type="function">
    <text evidence="1">Component of SCF(ASK-cullin-F-box) E3 ubiquitin ligase complexes, which may mediate the ubiquitination and subsequent proteasomal degradation of target proteins.</text>
</comment>
<comment type="pathway">
    <text>Protein modification; protein ubiquitination.</text>
</comment>
<comment type="subunit">
    <text evidence="1 2">Part of a SCF (SKP1-cullin-F-box) protein ligase complex (By similarity). Interacts with CUL1, CUL2 and SPK1B/ASK2.</text>
</comment>
<comment type="interaction">
    <interactant intactId="EBI-604740">
        <id>Q9ZPE4</id>
    </interactant>
    <interactant intactId="EBI-604076">
        <id>Q9FHW7</id>
        <label>SKP1B</label>
    </interactant>
    <organismsDiffer>false</organismsDiffer>
    <experiments>3</experiments>
</comment>
<comment type="subcellular location">
    <subcellularLocation>
        <location evidence="1">Nucleus</location>
    </subcellularLocation>
</comment>
<comment type="domain">
    <text evidence="1">The F-box is necessary for the interaction with ASK proteins.</text>
</comment>
<comment type="caution">
    <text evidence="3">Despite the nomenclature given by PubMed:11077244, FBW2 does not contain any WD-40 repeat.</text>
</comment>
<evidence type="ECO:0000250" key="1"/>
<evidence type="ECO:0000269" key="2">
    <source>
    </source>
</evidence>
<evidence type="ECO:0000305" key="3"/>
<keyword id="KW-0539">Nucleus</keyword>
<keyword id="KW-1185">Reference proteome</keyword>
<keyword id="KW-0833">Ubl conjugation pathway</keyword>
<organism>
    <name type="scientific">Arabidopsis thaliana</name>
    <name type="common">Mouse-ear cress</name>
    <dbReference type="NCBI Taxonomy" id="3702"/>
    <lineage>
        <taxon>Eukaryota</taxon>
        <taxon>Viridiplantae</taxon>
        <taxon>Streptophyta</taxon>
        <taxon>Embryophyta</taxon>
        <taxon>Tracheophyta</taxon>
        <taxon>Spermatophyta</taxon>
        <taxon>Magnoliopsida</taxon>
        <taxon>eudicotyledons</taxon>
        <taxon>Gunneridae</taxon>
        <taxon>Pentapetalae</taxon>
        <taxon>rosids</taxon>
        <taxon>malvids</taxon>
        <taxon>Brassicales</taxon>
        <taxon>Brassicaceae</taxon>
        <taxon>Camelineae</taxon>
        <taxon>Arabidopsis</taxon>
    </lineage>
</organism>
<protein>
    <recommendedName>
        <fullName>F-box protein FBW2</fullName>
    </recommendedName>
    <alternativeName>
        <fullName>SKP1-interacting partner 18</fullName>
    </alternativeName>
</protein>
<name>FBW2_ARATH</name>
<gene>
    <name type="primary">FBW2</name>
    <name type="synonym">SKIP18</name>
    <name type="ordered locus">At4g08980</name>
    <name type="ORF">T3H13.1</name>
</gene>
<reference key="1">
    <citation type="journal article" date="1999" name="Nature">
        <title>Sequence and analysis of chromosome 4 of the plant Arabidopsis thaliana.</title>
        <authorList>
            <person name="Mayer K.F.X."/>
            <person name="Schueller C."/>
            <person name="Wambutt R."/>
            <person name="Murphy G."/>
            <person name="Volckaert G."/>
            <person name="Pohl T."/>
            <person name="Duesterhoeft A."/>
            <person name="Stiekema W."/>
            <person name="Entian K.-D."/>
            <person name="Terryn N."/>
            <person name="Harris B."/>
            <person name="Ansorge W."/>
            <person name="Brandt P."/>
            <person name="Grivell L.A."/>
            <person name="Rieger M."/>
            <person name="Weichselgartner M."/>
            <person name="de Simone V."/>
            <person name="Obermaier B."/>
            <person name="Mache R."/>
            <person name="Mueller M."/>
            <person name="Kreis M."/>
            <person name="Delseny M."/>
            <person name="Puigdomenech P."/>
            <person name="Watson M."/>
            <person name="Schmidtheini T."/>
            <person name="Reichert B."/>
            <person name="Portetelle D."/>
            <person name="Perez-Alonso M."/>
            <person name="Boutry M."/>
            <person name="Bancroft I."/>
            <person name="Vos P."/>
            <person name="Hoheisel J."/>
            <person name="Zimmermann W."/>
            <person name="Wedler H."/>
            <person name="Ridley P."/>
            <person name="Langham S.-A."/>
            <person name="McCullagh B."/>
            <person name="Bilham L."/>
            <person name="Robben J."/>
            <person name="van der Schueren J."/>
            <person name="Grymonprez B."/>
            <person name="Chuang Y.-J."/>
            <person name="Vandenbussche F."/>
            <person name="Braeken M."/>
            <person name="Weltjens I."/>
            <person name="Voet M."/>
            <person name="Bastiaens I."/>
            <person name="Aert R."/>
            <person name="Defoor E."/>
            <person name="Weitzenegger T."/>
            <person name="Bothe G."/>
            <person name="Ramsperger U."/>
            <person name="Hilbert H."/>
            <person name="Braun M."/>
            <person name="Holzer E."/>
            <person name="Brandt A."/>
            <person name="Peters S."/>
            <person name="van Staveren M."/>
            <person name="Dirkse W."/>
            <person name="Mooijman P."/>
            <person name="Klein Lankhorst R."/>
            <person name="Rose M."/>
            <person name="Hauf J."/>
            <person name="Koetter P."/>
            <person name="Berneiser S."/>
            <person name="Hempel S."/>
            <person name="Feldpausch M."/>
            <person name="Lamberth S."/>
            <person name="Van den Daele H."/>
            <person name="De Keyser A."/>
            <person name="Buysshaert C."/>
            <person name="Gielen J."/>
            <person name="Villarroel R."/>
            <person name="De Clercq R."/>
            <person name="van Montagu M."/>
            <person name="Rogers J."/>
            <person name="Cronin A."/>
            <person name="Quail M.A."/>
            <person name="Bray-Allen S."/>
            <person name="Clark L."/>
            <person name="Doggett J."/>
            <person name="Hall S."/>
            <person name="Kay M."/>
            <person name="Lennard N."/>
            <person name="McLay K."/>
            <person name="Mayes R."/>
            <person name="Pettett A."/>
            <person name="Rajandream M.A."/>
            <person name="Lyne M."/>
            <person name="Benes V."/>
            <person name="Rechmann S."/>
            <person name="Borkova D."/>
            <person name="Bloecker H."/>
            <person name="Scharfe M."/>
            <person name="Grimm M."/>
            <person name="Loehnert T.-H."/>
            <person name="Dose S."/>
            <person name="de Haan M."/>
            <person name="Maarse A.C."/>
            <person name="Schaefer M."/>
            <person name="Mueller-Auer S."/>
            <person name="Gabel C."/>
            <person name="Fuchs M."/>
            <person name="Fartmann B."/>
            <person name="Granderath K."/>
            <person name="Dauner D."/>
            <person name="Herzl A."/>
            <person name="Neumann S."/>
            <person name="Argiriou A."/>
            <person name="Vitale D."/>
            <person name="Liguori R."/>
            <person name="Piravandi E."/>
            <person name="Massenet O."/>
            <person name="Quigley F."/>
            <person name="Clabauld G."/>
            <person name="Muendlein A."/>
            <person name="Felber R."/>
            <person name="Schnabl S."/>
            <person name="Hiller R."/>
            <person name="Schmidt W."/>
            <person name="Lecharny A."/>
            <person name="Aubourg S."/>
            <person name="Chefdor F."/>
            <person name="Cooke R."/>
            <person name="Berger C."/>
            <person name="Monfort A."/>
            <person name="Casacuberta E."/>
            <person name="Gibbons T."/>
            <person name="Weber N."/>
            <person name="Vandenbol M."/>
            <person name="Bargues M."/>
            <person name="Terol J."/>
            <person name="Torres A."/>
            <person name="Perez-Perez A."/>
            <person name="Purnelle B."/>
            <person name="Bent E."/>
            <person name="Johnson S."/>
            <person name="Tacon D."/>
            <person name="Jesse T."/>
            <person name="Heijnen L."/>
            <person name="Schwarz S."/>
            <person name="Scholler P."/>
            <person name="Heber S."/>
            <person name="Francs P."/>
            <person name="Bielke C."/>
            <person name="Frishman D."/>
            <person name="Haase D."/>
            <person name="Lemcke K."/>
            <person name="Mewes H.-W."/>
            <person name="Stocker S."/>
            <person name="Zaccaria P."/>
            <person name="Bevan M."/>
            <person name="Wilson R.K."/>
            <person name="de la Bastide M."/>
            <person name="Habermann K."/>
            <person name="Parnell L."/>
            <person name="Dedhia N."/>
            <person name="Gnoj L."/>
            <person name="Schutz K."/>
            <person name="Huang E."/>
            <person name="Spiegel L."/>
            <person name="Sekhon M."/>
            <person name="Murray J."/>
            <person name="Sheet P."/>
            <person name="Cordes M."/>
            <person name="Abu-Threideh J."/>
            <person name="Stoneking T."/>
            <person name="Kalicki J."/>
            <person name="Graves T."/>
            <person name="Harmon G."/>
            <person name="Edwards J."/>
            <person name="Latreille P."/>
            <person name="Courtney L."/>
            <person name="Cloud J."/>
            <person name="Abbott A."/>
            <person name="Scott K."/>
            <person name="Johnson D."/>
            <person name="Minx P."/>
            <person name="Bentley D."/>
            <person name="Fulton B."/>
            <person name="Miller N."/>
            <person name="Greco T."/>
            <person name="Kemp K."/>
            <person name="Kramer J."/>
            <person name="Fulton L."/>
            <person name="Mardis E."/>
            <person name="Dante M."/>
            <person name="Pepin K."/>
            <person name="Hillier L.W."/>
            <person name="Nelson J."/>
            <person name="Spieth J."/>
            <person name="Ryan E."/>
            <person name="Andrews S."/>
            <person name="Geisel C."/>
            <person name="Layman D."/>
            <person name="Du H."/>
            <person name="Ali J."/>
            <person name="Berghoff A."/>
            <person name="Jones K."/>
            <person name="Drone K."/>
            <person name="Cotton M."/>
            <person name="Joshu C."/>
            <person name="Antonoiu B."/>
            <person name="Zidanic M."/>
            <person name="Strong C."/>
            <person name="Sun H."/>
            <person name="Lamar B."/>
            <person name="Yordan C."/>
            <person name="Ma P."/>
            <person name="Zhong J."/>
            <person name="Preston R."/>
            <person name="Vil D."/>
            <person name="Shekher M."/>
            <person name="Matero A."/>
            <person name="Shah R."/>
            <person name="Swaby I.K."/>
            <person name="O'Shaughnessy A."/>
            <person name="Rodriguez M."/>
            <person name="Hoffman J."/>
            <person name="Till S."/>
            <person name="Granat S."/>
            <person name="Shohdy N."/>
            <person name="Hasegawa A."/>
            <person name="Hameed A."/>
            <person name="Lodhi M."/>
            <person name="Johnson A."/>
            <person name="Chen E."/>
            <person name="Marra M.A."/>
            <person name="Martienssen R."/>
            <person name="McCombie W.R."/>
        </authorList>
    </citation>
    <scope>NUCLEOTIDE SEQUENCE [LARGE SCALE GENOMIC DNA]</scope>
    <source>
        <strain>cv. Columbia</strain>
    </source>
</reference>
<reference key="2">
    <citation type="journal article" date="2017" name="Plant J.">
        <title>Araport11: a complete reannotation of the Arabidopsis thaliana reference genome.</title>
        <authorList>
            <person name="Cheng C.Y."/>
            <person name="Krishnakumar V."/>
            <person name="Chan A.P."/>
            <person name="Thibaud-Nissen F."/>
            <person name="Schobel S."/>
            <person name="Town C.D."/>
        </authorList>
    </citation>
    <scope>GENOME REANNOTATION</scope>
    <source>
        <strain>cv. Columbia</strain>
    </source>
</reference>
<reference key="3">
    <citation type="journal article" date="2003" name="Science">
        <title>Empirical analysis of transcriptional activity in the Arabidopsis genome.</title>
        <authorList>
            <person name="Yamada K."/>
            <person name="Lim J."/>
            <person name="Dale J.M."/>
            <person name="Chen H."/>
            <person name="Shinn P."/>
            <person name="Palm C.J."/>
            <person name="Southwick A.M."/>
            <person name="Wu H.C."/>
            <person name="Kim C.J."/>
            <person name="Nguyen M."/>
            <person name="Pham P.K."/>
            <person name="Cheuk R.F."/>
            <person name="Karlin-Newmann G."/>
            <person name="Liu S.X."/>
            <person name="Lam B."/>
            <person name="Sakano H."/>
            <person name="Wu T."/>
            <person name="Yu G."/>
            <person name="Miranda M."/>
            <person name="Quach H.L."/>
            <person name="Tripp M."/>
            <person name="Chang C.H."/>
            <person name="Lee J.M."/>
            <person name="Toriumi M.J."/>
            <person name="Chan M.M."/>
            <person name="Tang C.C."/>
            <person name="Onodera C.S."/>
            <person name="Deng J.M."/>
            <person name="Akiyama K."/>
            <person name="Ansari Y."/>
            <person name="Arakawa T."/>
            <person name="Banh J."/>
            <person name="Banno F."/>
            <person name="Bowser L."/>
            <person name="Brooks S.Y."/>
            <person name="Carninci P."/>
            <person name="Chao Q."/>
            <person name="Choy N."/>
            <person name="Enju A."/>
            <person name="Goldsmith A.D."/>
            <person name="Gurjal M."/>
            <person name="Hansen N.F."/>
            <person name="Hayashizaki Y."/>
            <person name="Johnson-Hopson C."/>
            <person name="Hsuan V.W."/>
            <person name="Iida K."/>
            <person name="Karnes M."/>
            <person name="Khan S."/>
            <person name="Koesema E."/>
            <person name="Ishida J."/>
            <person name="Jiang P.X."/>
            <person name="Jones T."/>
            <person name="Kawai J."/>
            <person name="Kamiya A."/>
            <person name="Meyers C."/>
            <person name="Nakajima M."/>
            <person name="Narusaka M."/>
            <person name="Seki M."/>
            <person name="Sakurai T."/>
            <person name="Satou M."/>
            <person name="Tamse R."/>
            <person name="Vaysberg M."/>
            <person name="Wallender E.K."/>
            <person name="Wong C."/>
            <person name="Yamamura Y."/>
            <person name="Yuan S."/>
            <person name="Shinozaki K."/>
            <person name="Davis R.W."/>
            <person name="Theologis A."/>
            <person name="Ecker J.R."/>
        </authorList>
    </citation>
    <scope>NUCLEOTIDE SEQUENCE [LARGE SCALE MRNA]</scope>
    <source>
        <strain>cv. Columbia</strain>
    </source>
</reference>
<reference key="4">
    <citation type="journal article" date="2009" name="DNA Res.">
        <title>Analysis of multiple occurrences of alternative splicing events in Arabidopsis thaliana using novel sequenced full-length cDNAs.</title>
        <authorList>
            <person name="Iida K."/>
            <person name="Fukami-Kobayashi K."/>
            <person name="Toyoda A."/>
            <person name="Sakaki Y."/>
            <person name="Kobayashi M."/>
            <person name="Seki M."/>
            <person name="Shinozaki K."/>
        </authorList>
    </citation>
    <scope>NUCLEOTIDE SEQUENCE [LARGE SCALE MRNA]</scope>
    <source>
        <strain>cv. Columbia</strain>
    </source>
</reference>
<reference key="5">
    <citation type="submission" date="2002-03" db="EMBL/GenBank/DDBJ databases">
        <title>Full-length cDNA from Arabidopsis thaliana.</title>
        <authorList>
            <person name="Brover V.V."/>
            <person name="Troukhan M.E."/>
            <person name="Alexandrov N.A."/>
            <person name="Lu Y.-P."/>
            <person name="Flavell R.B."/>
            <person name="Feldmann K.A."/>
        </authorList>
    </citation>
    <scope>NUCLEOTIDE SEQUENCE [LARGE SCALE MRNA]</scope>
</reference>
<reference key="6">
    <citation type="journal article" date="2000" name="Trends Plant Sci.">
        <title>F-box proteins in Arabidopsis.</title>
        <authorList>
            <person name="Xiao W."/>
            <person name="Jang J.-C."/>
        </authorList>
    </citation>
    <scope>GENE FAMILY</scope>
    <scope>NOMENCLATURE</scope>
</reference>
<reference key="7">
    <citation type="journal article" date="2003" name="Plant J.">
        <title>Protein interaction analysis of SCF ubiquitin E3 ligase subunits from Arabidopsis.</title>
        <authorList>
            <person name="Risseeuw E.P."/>
            <person name="Daskalchuk T.E."/>
            <person name="Banks T.W."/>
            <person name="Liu E."/>
            <person name="Cotelesage J."/>
            <person name="Hellmann H."/>
            <person name="Estelle M."/>
            <person name="Somers D.E."/>
            <person name="Crosby W.L."/>
        </authorList>
    </citation>
    <scope>INTERACTION WITH CUL1; CUL2 AND SPK1B/ASK2</scope>
</reference>
<dbReference type="EMBL" id="AF128396">
    <property type="protein sequence ID" value="AAD17367.1"/>
    <property type="molecule type" value="Genomic_DNA"/>
</dbReference>
<dbReference type="EMBL" id="AL161513">
    <property type="protein sequence ID" value="CAB78022.1"/>
    <property type="molecule type" value="Genomic_DNA"/>
</dbReference>
<dbReference type="EMBL" id="CP002687">
    <property type="protein sequence ID" value="AEE82703.1"/>
    <property type="molecule type" value="Genomic_DNA"/>
</dbReference>
<dbReference type="EMBL" id="CP002687">
    <property type="protein sequence ID" value="AEE82704.1"/>
    <property type="molecule type" value="Genomic_DNA"/>
</dbReference>
<dbReference type="EMBL" id="CP002687">
    <property type="protein sequence ID" value="AEE82705.1"/>
    <property type="molecule type" value="Genomic_DNA"/>
</dbReference>
<dbReference type="EMBL" id="CP002687">
    <property type="protein sequence ID" value="AEE82706.1"/>
    <property type="molecule type" value="Genomic_DNA"/>
</dbReference>
<dbReference type="EMBL" id="CP002687">
    <property type="protein sequence ID" value="AEE82707.1"/>
    <property type="molecule type" value="Genomic_DNA"/>
</dbReference>
<dbReference type="EMBL" id="BT002431">
    <property type="protein sequence ID" value="AAO00791.1"/>
    <property type="molecule type" value="mRNA"/>
</dbReference>
<dbReference type="EMBL" id="BT008715">
    <property type="protein sequence ID" value="AAP42728.1"/>
    <property type="molecule type" value="mRNA"/>
</dbReference>
<dbReference type="EMBL" id="AK317222">
    <property type="protein sequence ID" value="BAH19904.1"/>
    <property type="molecule type" value="mRNA"/>
</dbReference>
<dbReference type="EMBL" id="AY084585">
    <property type="protein sequence ID" value="AAM61150.1"/>
    <property type="molecule type" value="mRNA"/>
</dbReference>
<dbReference type="PIR" id="F85090">
    <property type="entry name" value="F85090"/>
</dbReference>
<dbReference type="RefSeq" id="NP_001078359.1">
    <property type="nucleotide sequence ID" value="NM_001084890.3"/>
</dbReference>
<dbReference type="RefSeq" id="NP_001154215.1">
    <property type="nucleotide sequence ID" value="NM_001160743.1"/>
</dbReference>
<dbReference type="RefSeq" id="NP_567343.1">
    <property type="nucleotide sequence ID" value="NM_116967.3"/>
</dbReference>
<dbReference type="RefSeq" id="NP_849346.1">
    <property type="nucleotide sequence ID" value="NM_179015.3"/>
</dbReference>
<dbReference type="RefSeq" id="NP_974523.1">
    <property type="nucleotide sequence ID" value="NM_202794.1"/>
</dbReference>
<dbReference type="SMR" id="Q9ZPE4"/>
<dbReference type="BioGRID" id="11775">
    <property type="interactions" value="27"/>
</dbReference>
<dbReference type="FunCoup" id="Q9ZPE4">
    <property type="interactions" value="836"/>
</dbReference>
<dbReference type="IntAct" id="Q9ZPE4">
    <property type="interactions" value="14"/>
</dbReference>
<dbReference type="STRING" id="3702.Q9ZPE4"/>
<dbReference type="iPTMnet" id="Q9ZPE4"/>
<dbReference type="PaxDb" id="3702-AT4G08980.2"/>
<dbReference type="EnsemblPlants" id="AT4G08980.1">
    <property type="protein sequence ID" value="AT4G08980.1"/>
    <property type="gene ID" value="AT4G08980"/>
</dbReference>
<dbReference type="EnsemblPlants" id="AT4G08980.2">
    <property type="protein sequence ID" value="AT4G08980.2"/>
    <property type="gene ID" value="AT4G08980"/>
</dbReference>
<dbReference type="EnsemblPlants" id="AT4G08980.3">
    <property type="protein sequence ID" value="AT4G08980.3"/>
    <property type="gene ID" value="AT4G08980"/>
</dbReference>
<dbReference type="EnsemblPlants" id="AT4G08980.4">
    <property type="protein sequence ID" value="AT4G08980.4"/>
    <property type="gene ID" value="AT4G08980"/>
</dbReference>
<dbReference type="EnsemblPlants" id="AT4G08980.5">
    <property type="protein sequence ID" value="AT4G08980.5"/>
    <property type="gene ID" value="AT4G08980"/>
</dbReference>
<dbReference type="GeneID" id="826476"/>
<dbReference type="Gramene" id="AT4G08980.1">
    <property type="protein sequence ID" value="AT4G08980.1"/>
    <property type="gene ID" value="AT4G08980"/>
</dbReference>
<dbReference type="Gramene" id="AT4G08980.2">
    <property type="protein sequence ID" value="AT4G08980.2"/>
    <property type="gene ID" value="AT4G08980"/>
</dbReference>
<dbReference type="Gramene" id="AT4G08980.3">
    <property type="protein sequence ID" value="AT4G08980.3"/>
    <property type="gene ID" value="AT4G08980"/>
</dbReference>
<dbReference type="Gramene" id="AT4G08980.4">
    <property type="protein sequence ID" value="AT4G08980.4"/>
    <property type="gene ID" value="AT4G08980"/>
</dbReference>
<dbReference type="Gramene" id="AT4G08980.5">
    <property type="protein sequence ID" value="AT4G08980.5"/>
    <property type="gene ID" value="AT4G08980"/>
</dbReference>
<dbReference type="KEGG" id="ath:AT4G08980"/>
<dbReference type="Araport" id="AT4G08980"/>
<dbReference type="TAIR" id="AT4G08980">
    <property type="gene designation" value="FBW2"/>
</dbReference>
<dbReference type="eggNOG" id="KOG1947">
    <property type="taxonomic scope" value="Eukaryota"/>
</dbReference>
<dbReference type="HOGENOM" id="CLU_044915_2_0_1"/>
<dbReference type="InParanoid" id="Q9ZPE4"/>
<dbReference type="OMA" id="FCRNMHP"/>
<dbReference type="OrthoDB" id="550575at2759"/>
<dbReference type="PhylomeDB" id="Q9ZPE4"/>
<dbReference type="UniPathway" id="UPA00143"/>
<dbReference type="PRO" id="PR:Q9ZPE4"/>
<dbReference type="Proteomes" id="UP000006548">
    <property type="component" value="Chromosome 4"/>
</dbReference>
<dbReference type="ExpressionAtlas" id="Q9ZPE4">
    <property type="expression patterns" value="baseline and differential"/>
</dbReference>
<dbReference type="GO" id="GO:0005634">
    <property type="term" value="C:nucleus"/>
    <property type="evidence" value="ECO:0007669"/>
    <property type="project" value="UniProtKB-SubCell"/>
</dbReference>
<dbReference type="GO" id="GO:0010629">
    <property type="term" value="P:negative regulation of gene expression"/>
    <property type="evidence" value="ECO:0000315"/>
    <property type="project" value="TAIR"/>
</dbReference>
<dbReference type="GO" id="GO:0010608">
    <property type="term" value="P:post-transcriptional regulation of gene expression"/>
    <property type="evidence" value="ECO:0000315"/>
    <property type="project" value="TAIR"/>
</dbReference>
<dbReference type="GO" id="GO:0016567">
    <property type="term" value="P:protein ubiquitination"/>
    <property type="evidence" value="ECO:0000314"/>
    <property type="project" value="TAIR"/>
</dbReference>
<dbReference type="GO" id="GO:0009737">
    <property type="term" value="P:response to abscisic acid"/>
    <property type="evidence" value="ECO:0000315"/>
    <property type="project" value="TAIR"/>
</dbReference>
<dbReference type="GO" id="GO:0006511">
    <property type="term" value="P:ubiquitin-dependent protein catabolic process"/>
    <property type="evidence" value="ECO:0000314"/>
    <property type="project" value="TAIR"/>
</dbReference>
<dbReference type="FunFam" id="1.20.1280.50:FF:000022">
    <property type="entry name" value="F-box protein FBW2"/>
    <property type="match status" value="1"/>
</dbReference>
<dbReference type="FunFam" id="3.80.10.10:FF:000257">
    <property type="entry name" value="F-box protein FBW2"/>
    <property type="match status" value="1"/>
</dbReference>
<dbReference type="Gene3D" id="1.20.1280.50">
    <property type="match status" value="1"/>
</dbReference>
<dbReference type="Gene3D" id="3.80.10.10">
    <property type="entry name" value="Ribonuclease Inhibitor"/>
    <property type="match status" value="1"/>
</dbReference>
<dbReference type="InterPro" id="IPR001810">
    <property type="entry name" value="F-box_dom"/>
</dbReference>
<dbReference type="InterPro" id="IPR001611">
    <property type="entry name" value="Leu-rich_rpt"/>
</dbReference>
<dbReference type="InterPro" id="IPR032675">
    <property type="entry name" value="LRR_dom_sf"/>
</dbReference>
<dbReference type="PANTHER" id="PTHR38926">
    <property type="entry name" value="F-BOX DOMAIN CONTAINING PROTEIN, EXPRESSED"/>
    <property type="match status" value="1"/>
</dbReference>
<dbReference type="PANTHER" id="PTHR38926:SF80">
    <property type="entry name" value="F-BOX DOMAIN, LEUCINE-RICH REPEAT DOMAIN SUPERFAMILY"/>
    <property type="match status" value="1"/>
</dbReference>
<dbReference type="Pfam" id="PF12937">
    <property type="entry name" value="F-box-like"/>
    <property type="match status" value="1"/>
</dbReference>
<dbReference type="Pfam" id="PF13516">
    <property type="entry name" value="LRR_6"/>
    <property type="match status" value="1"/>
</dbReference>
<dbReference type="SUPFAM" id="SSF52047">
    <property type="entry name" value="RNI-like"/>
    <property type="match status" value="1"/>
</dbReference>
<sequence>MEEDCEFRHWDELIPDALGLIFSHLPLQEVLTVVPRVCKAWNRAVTGPYCWQEIDIELWSNRFHQSDHLDRMLEMLIPRSAGSLRKLSVTGLRNDSIFSFIAQHAGSLKTLKVPRSGLTNSGVVNVAEKLSSLTFLDLSYCCKIGPEAIQAIGKHCKSLREFCRNMHPLDVASVVSHDDEAYAIANTMPKLKRLEIAYHRVSTEGVLKILSCCVFLEFLELRGCWDVQLDNKFFKEKFPDMKVLGPRVIGFYDMINDWEDCCSDYFSDGSDYLAWEFFEDGVMGEFYEDEFEHGWDDNFYAENAVLDMEPHIWPPSP</sequence>
<proteinExistence type="evidence at protein level"/>